<comment type="function">
    <text evidence="1">FMRFamides and FMRFamide-like peptides are neuropeptides.</text>
</comment>
<comment type="subcellular location">
    <subcellularLocation>
        <location evidence="6">Secreted</location>
    </subcellularLocation>
</comment>
<comment type="similarity">
    <text evidence="2">Belongs to the FARP (FMRF amide related peptide) family.</text>
</comment>
<feature type="peptide" id="PRO_0000420506" description="Extended FMRFamide-12" evidence="3">
    <location>
        <begin position="1"/>
        <end position="15"/>
    </location>
</feature>
<dbReference type="GO" id="GO:0005576">
    <property type="term" value="C:extracellular region"/>
    <property type="evidence" value="ECO:0007669"/>
    <property type="project" value="UniProtKB-SubCell"/>
</dbReference>
<dbReference type="GO" id="GO:0007218">
    <property type="term" value="P:neuropeptide signaling pathway"/>
    <property type="evidence" value="ECO:0007669"/>
    <property type="project" value="UniProtKB-KW"/>
</dbReference>
<reference evidence="5" key="1">
    <citation type="journal article" date="2012" name="Syst. Biol.">
        <title>Peptidomics-based phylogeny and biogeography of Mantophasmatodea (Hexapoda).</title>
        <authorList>
            <person name="Predel R."/>
            <person name="Neupert S."/>
            <person name="Huetteroth W."/>
            <person name="Kahnt J."/>
            <person name="Waidelich D."/>
            <person name="Roth S."/>
        </authorList>
    </citation>
    <scope>PROTEIN SEQUENCE</scope>
    <source>
        <tissue evidence="3">Thoracic perisympathetic organs</tissue>
    </source>
</reference>
<accession>B0M2U1</accession>
<evidence type="ECO:0000250" key="1">
    <source>
        <dbReference type="UniProtKB" id="P34405"/>
    </source>
</evidence>
<evidence type="ECO:0000255" key="2"/>
<evidence type="ECO:0000269" key="3">
    <source>
    </source>
</evidence>
<evidence type="ECO:0000303" key="4">
    <source>
    </source>
</evidence>
<evidence type="ECO:0000305" key="5"/>
<evidence type="ECO:0000305" key="6">
    <source>
    </source>
</evidence>
<organism>
    <name type="scientific">Namaquaphasma ookiepense</name>
    <name type="common">Gladiator bug</name>
    <dbReference type="NCBI Taxonomy" id="409167"/>
    <lineage>
        <taxon>Eukaryota</taxon>
        <taxon>Metazoa</taxon>
        <taxon>Ecdysozoa</taxon>
        <taxon>Arthropoda</taxon>
        <taxon>Hexapoda</taxon>
        <taxon>Insecta</taxon>
        <taxon>Pterygota</taxon>
        <taxon>Neoptera</taxon>
        <taxon>Polyneoptera</taxon>
        <taxon>Mantophasmatodea</taxon>
        <taxon>Austrophasmatidae</taxon>
        <taxon>Namaquaphasma</taxon>
    </lineage>
</organism>
<sequence>SPSLDDERNDNFVRL</sequence>
<protein>
    <recommendedName>
        <fullName evidence="4">Extended FMRFamide-12</fullName>
        <shortName evidence="4">FMRFa-12</shortName>
    </recommendedName>
</protein>
<keyword id="KW-0903">Direct protein sequencing</keyword>
<keyword id="KW-0527">Neuropeptide</keyword>
<keyword id="KW-0964">Secreted</keyword>
<proteinExistence type="evidence at protein level"/>
<name>FAR12_NAMOO</name>